<organism>
    <name type="scientific">Arabidopsis thaliana</name>
    <name type="common">Mouse-ear cress</name>
    <dbReference type="NCBI Taxonomy" id="3702"/>
    <lineage>
        <taxon>Eukaryota</taxon>
        <taxon>Viridiplantae</taxon>
        <taxon>Streptophyta</taxon>
        <taxon>Embryophyta</taxon>
        <taxon>Tracheophyta</taxon>
        <taxon>Spermatophyta</taxon>
        <taxon>Magnoliopsida</taxon>
        <taxon>eudicotyledons</taxon>
        <taxon>Gunneridae</taxon>
        <taxon>Pentapetalae</taxon>
        <taxon>rosids</taxon>
        <taxon>malvids</taxon>
        <taxon>Brassicales</taxon>
        <taxon>Brassicaceae</taxon>
        <taxon>Camelineae</taxon>
        <taxon>Arabidopsis</taxon>
    </lineage>
</organism>
<keyword id="KW-0031">Aminopeptidase</keyword>
<keyword id="KW-0963">Cytoplasm</keyword>
<keyword id="KW-0903">Direct protein sequencing</keyword>
<keyword id="KW-0256">Endoplasmic reticulum</keyword>
<keyword id="KW-0378">Hydrolase</keyword>
<keyword id="KW-0472">Membrane</keyword>
<keyword id="KW-0479">Metal-binding</keyword>
<keyword id="KW-0482">Metalloprotease</keyword>
<keyword id="KW-0492">Microsome</keyword>
<keyword id="KW-0645">Protease</keyword>
<keyword id="KW-1185">Reference proteome</keyword>
<keyword id="KW-0862">Zinc</keyword>
<sequence length="879" mass="98179">MDQFKGEPRLPKFAVPKRYDLRLNPDLIACTFTGTVAIDLDIVADTRFIVLNAADLSVNDASVSFTPPSSSKALAAPKVVLFEEDEILVLEFGEILPHGVGVLKLGFNGVLNDKMKGFYRSTYEHNGEKKNMAVTQFEPADARRCFPCWDEPACKATFKITLEVPTDLVALSNMPIMEEKVNGNLKIVSYQESPIMSTYLVAIVVGLFDYVEDHTSDGIKVRVYCQVGKADQGKFALHVGAKTLDLFKEYFAVPYPLPKMDMIAIPDFAAGAMENYGLVTYRETALLYDEQHSAASNKQRVATVVAHELAHQWFGNLVTMEWWTHLWLNEGFATWVSYLATDSLFPEWKIWTQFLDESTEGLRLDGLEESHPIEVEVNHAAEIDEIFDAISYRKGASVIRMLQSYLGAEVFQKSLAAYIKNHAYSNAKTEDLWAALEAGSGEPVNKLMSSWTKQKGYPVVSAKIKDGKLELEQSRFLSSGSPGEGQWIVPVTLCCGSYEKRKNFLLESKSGAYDLKELLGCSIADGSDKINGTCSWIKINVDQAGFYRVKYDDSLAAGLRNATESQSLTSIDRYGILDDSFALTMARQQSLASLLTLCSAYKKELDYTVLSNLIAISYKVVKIGADANQELMSGIKHFFIGVFQFAAGKLGWDPKQGESHLDAMLRGEVLTALAVFGHDETLKEAVRRFDAFLADRNTPLLPPDIRRAAYVAVMQRANKSDKSGYESLLRVYRETDLSQEKTRILGSLASCPDPTIVQDVLNFVLSDEVRNQDALYGLSGVSWEGREVAWKWLQEKWEYIGNTWGSGFLITRFISAVVSPFASFEKAKEVEEFFATRSKPSMARTLKQSIERVHINANWVESIKKEDNLTQLVAQLSSN</sequence>
<dbReference type="EC" id="3.4.11.2"/>
<dbReference type="EMBL" id="AY143574">
    <property type="protein sequence ID" value="AAN41401.1"/>
    <property type="molecule type" value="mRNA"/>
</dbReference>
<dbReference type="EMBL" id="AL035525">
    <property type="protein sequence ID" value="CAB36783.1"/>
    <property type="status" value="ALT_SEQ"/>
    <property type="molecule type" value="Genomic_DNA"/>
</dbReference>
<dbReference type="EMBL" id="AL161582">
    <property type="protein sequence ID" value="CAB80026.1"/>
    <property type="status" value="ALT_SEQ"/>
    <property type="molecule type" value="Genomic_DNA"/>
</dbReference>
<dbReference type="EMBL" id="CP002687">
    <property type="protein sequence ID" value="AEE86172.1"/>
    <property type="molecule type" value="Genomic_DNA"/>
</dbReference>
<dbReference type="EMBL" id="AY064961">
    <property type="protein sequence ID" value="AAL38379.1"/>
    <property type="molecule type" value="mRNA"/>
</dbReference>
<dbReference type="EMBL" id="BT005811">
    <property type="protein sequence ID" value="AAO64746.1"/>
    <property type="molecule type" value="mRNA"/>
</dbReference>
<dbReference type="EMBL" id="AK222071">
    <property type="protein sequence ID" value="BAD94901.1"/>
    <property type="status" value="ALT_INIT"/>
    <property type="molecule type" value="mRNA"/>
</dbReference>
<dbReference type="EMBL" id="AK227105">
    <property type="protein sequence ID" value="BAE99157.1"/>
    <property type="molecule type" value="mRNA"/>
</dbReference>
<dbReference type="PIR" id="T05189">
    <property type="entry name" value="T05189"/>
</dbReference>
<dbReference type="RefSeq" id="NP_195035.2">
    <property type="nucleotide sequence ID" value="NM_119463.5"/>
</dbReference>
<dbReference type="SMR" id="Q8VZH2"/>
<dbReference type="BioGRID" id="14731">
    <property type="interactions" value="31"/>
</dbReference>
<dbReference type="FunCoup" id="Q8VZH2">
    <property type="interactions" value="3736"/>
</dbReference>
<dbReference type="IntAct" id="Q8VZH2">
    <property type="interactions" value="1"/>
</dbReference>
<dbReference type="STRING" id="3702.Q8VZH2"/>
<dbReference type="MEROPS" id="M01.A25"/>
<dbReference type="PaxDb" id="3702-AT4G33090.1"/>
<dbReference type="ProMEX" id="Q8VZH2"/>
<dbReference type="ProteomicsDB" id="244964"/>
<dbReference type="EnsemblPlants" id="AT4G33090.1">
    <property type="protein sequence ID" value="AT4G33090.1"/>
    <property type="gene ID" value="AT4G33090"/>
</dbReference>
<dbReference type="GeneID" id="829446"/>
<dbReference type="Gramene" id="AT4G33090.1">
    <property type="protein sequence ID" value="AT4G33090.1"/>
    <property type="gene ID" value="AT4G33090"/>
</dbReference>
<dbReference type="KEGG" id="ath:AT4G33090"/>
<dbReference type="Araport" id="AT4G33090"/>
<dbReference type="TAIR" id="AT4G33090">
    <property type="gene designation" value="APM1"/>
</dbReference>
<dbReference type="eggNOG" id="KOG1046">
    <property type="taxonomic scope" value="Eukaryota"/>
</dbReference>
<dbReference type="HOGENOM" id="CLU_003705_0_1_1"/>
<dbReference type="InParanoid" id="Q8VZH2"/>
<dbReference type="OMA" id="MMEYVAI"/>
<dbReference type="OrthoDB" id="10031169at2759"/>
<dbReference type="PhylomeDB" id="Q8VZH2"/>
<dbReference type="PRO" id="PR:Q8VZH2"/>
<dbReference type="Proteomes" id="UP000006548">
    <property type="component" value="Chromosome 4"/>
</dbReference>
<dbReference type="ExpressionAtlas" id="Q8VZH2">
    <property type="expression patterns" value="baseline and differential"/>
</dbReference>
<dbReference type="GO" id="GO:0005829">
    <property type="term" value="C:cytosol"/>
    <property type="evidence" value="ECO:0007005"/>
    <property type="project" value="TAIR"/>
</dbReference>
<dbReference type="GO" id="GO:0005783">
    <property type="term" value="C:endoplasmic reticulum"/>
    <property type="evidence" value="ECO:0007669"/>
    <property type="project" value="UniProtKB-KW"/>
</dbReference>
<dbReference type="GO" id="GO:0005886">
    <property type="term" value="C:plasma membrane"/>
    <property type="evidence" value="ECO:0000314"/>
    <property type="project" value="TAIR"/>
</dbReference>
<dbReference type="GO" id="GO:0016285">
    <property type="term" value="F:alanyl aminopeptidase activity"/>
    <property type="evidence" value="ECO:0007669"/>
    <property type="project" value="UniProtKB-EC"/>
</dbReference>
<dbReference type="GO" id="GO:0004177">
    <property type="term" value="F:aminopeptidase activity"/>
    <property type="evidence" value="ECO:0000314"/>
    <property type="project" value="TAIR"/>
</dbReference>
<dbReference type="GO" id="GO:0008237">
    <property type="term" value="F:metallopeptidase activity"/>
    <property type="evidence" value="ECO:0007669"/>
    <property type="project" value="UniProtKB-KW"/>
</dbReference>
<dbReference type="GO" id="GO:0010013">
    <property type="term" value="F:N-1-naphthylphthalamic acid binding"/>
    <property type="evidence" value="ECO:0000314"/>
    <property type="project" value="UniProtKB"/>
</dbReference>
<dbReference type="GO" id="GO:0008270">
    <property type="term" value="F:zinc ion binding"/>
    <property type="evidence" value="ECO:0007669"/>
    <property type="project" value="InterPro"/>
</dbReference>
<dbReference type="GO" id="GO:0009926">
    <property type="term" value="P:auxin polar transport"/>
    <property type="evidence" value="ECO:0000304"/>
    <property type="project" value="TAIR"/>
</dbReference>
<dbReference type="GO" id="GO:0006508">
    <property type="term" value="P:proteolysis"/>
    <property type="evidence" value="ECO:0007669"/>
    <property type="project" value="UniProtKB-KW"/>
</dbReference>
<dbReference type="CDD" id="cd09601">
    <property type="entry name" value="M1_APN-Q_like"/>
    <property type="match status" value="1"/>
</dbReference>
<dbReference type="FunFam" id="1.10.390.10:FF:000001">
    <property type="entry name" value="Aminopeptidase"/>
    <property type="match status" value="1"/>
</dbReference>
<dbReference type="FunFam" id="1.25.50.20:FF:000002">
    <property type="entry name" value="Aminopeptidase"/>
    <property type="match status" value="1"/>
</dbReference>
<dbReference type="FunFam" id="2.60.40.1730:FF:000009">
    <property type="entry name" value="Aminopeptidase"/>
    <property type="match status" value="1"/>
</dbReference>
<dbReference type="FunFam" id="2.60.40.1910:FF:000007">
    <property type="entry name" value="Aminopeptidase"/>
    <property type="match status" value="1"/>
</dbReference>
<dbReference type="Gene3D" id="1.25.50.20">
    <property type="match status" value="1"/>
</dbReference>
<dbReference type="Gene3D" id="2.60.40.1910">
    <property type="match status" value="1"/>
</dbReference>
<dbReference type="Gene3D" id="1.10.390.10">
    <property type="entry name" value="Neutral Protease Domain 2"/>
    <property type="match status" value="1"/>
</dbReference>
<dbReference type="Gene3D" id="2.60.40.1730">
    <property type="entry name" value="tricorn interacting facor f3 domain"/>
    <property type="match status" value="1"/>
</dbReference>
<dbReference type="InterPro" id="IPR045357">
    <property type="entry name" value="Aminopeptidase_N-like_N"/>
</dbReference>
<dbReference type="InterPro" id="IPR042097">
    <property type="entry name" value="Aminopeptidase_N-like_N_sf"/>
</dbReference>
<dbReference type="InterPro" id="IPR024571">
    <property type="entry name" value="ERAP1-like_C_dom"/>
</dbReference>
<dbReference type="InterPro" id="IPR034016">
    <property type="entry name" value="M1_APN-typ"/>
</dbReference>
<dbReference type="InterPro" id="IPR001930">
    <property type="entry name" value="Peptidase_M1"/>
</dbReference>
<dbReference type="InterPro" id="IPR050344">
    <property type="entry name" value="Peptidase_M1_aminopeptidases"/>
</dbReference>
<dbReference type="InterPro" id="IPR014782">
    <property type="entry name" value="Peptidase_M1_dom"/>
</dbReference>
<dbReference type="InterPro" id="IPR027268">
    <property type="entry name" value="Peptidase_M4/M1_CTD_sf"/>
</dbReference>
<dbReference type="PANTHER" id="PTHR11533">
    <property type="entry name" value="PROTEASE M1 ZINC METALLOPROTEASE"/>
    <property type="match status" value="1"/>
</dbReference>
<dbReference type="PANTHER" id="PTHR11533:SF174">
    <property type="entry name" value="PUROMYCIN-SENSITIVE AMINOPEPTIDASE-RELATED"/>
    <property type="match status" value="1"/>
</dbReference>
<dbReference type="Pfam" id="PF11838">
    <property type="entry name" value="ERAP1_C"/>
    <property type="match status" value="1"/>
</dbReference>
<dbReference type="Pfam" id="PF01433">
    <property type="entry name" value="Peptidase_M1"/>
    <property type="match status" value="1"/>
</dbReference>
<dbReference type="Pfam" id="PF17900">
    <property type="entry name" value="Peptidase_M1_N"/>
    <property type="match status" value="1"/>
</dbReference>
<dbReference type="PRINTS" id="PR00756">
    <property type="entry name" value="ALADIPTASE"/>
</dbReference>
<dbReference type="SUPFAM" id="SSF63737">
    <property type="entry name" value="Leukotriene A4 hydrolase N-terminal domain"/>
    <property type="match status" value="1"/>
</dbReference>
<dbReference type="SUPFAM" id="SSF55486">
    <property type="entry name" value="Metalloproteases ('zincins'), catalytic domain"/>
    <property type="match status" value="1"/>
</dbReference>
<dbReference type="PROSITE" id="PS00142">
    <property type="entry name" value="ZINC_PROTEASE"/>
    <property type="match status" value="1"/>
</dbReference>
<comment type="function">
    <text evidence="4 5 6 7">Metallopeptidase that binds to the auxin transport inhibitor N-1-naphthylphthalamic acid (NPA). Required for embryonic and seedling development as well as cell cycle progression. Homodimerization is required to proper localization and activity. May play a negative role in the regulation of PIN auxin transport proteins.</text>
</comment>
<comment type="catalytic activity">
    <reaction>
        <text>Release of an N-terminal amino acid, Xaa-|-Yaa- from a peptide, amide or arylamide. Xaa is preferably Ala, but may be most amino acids including Pro (slow action). When a terminal hydrophobic residue is followed by a prolyl residue, the two may be released as an intact Xaa-Pro dipeptide.</text>
        <dbReference type="EC" id="3.4.11.2"/>
    </reaction>
</comment>
<comment type="cofactor">
    <cofactor evidence="4">
        <name>Zn(2+)</name>
        <dbReference type="ChEBI" id="CHEBI:29105"/>
    </cofactor>
    <text evidence="4">Binds 1 zinc ion per subunit.</text>
</comment>
<comment type="biophysicochemical properties">
    <kinetics>
        <Vmax evidence="4">59.0 nmol/min/mg enzyme for Tyr-aminofluoromethylcoumarin</Vmax>
        <Vmax evidence="4">35.0 nmol/min/mg enzyme for Ala-aminofluoromethylcoumarin</Vmax>
        <Vmax evidence="4">18.0 nmol/min/mg enzyme for Pro-aminofluoromethylcoumarin</Vmax>
    </kinetics>
</comment>
<comment type="subunit">
    <text evidence="6">Homodimer. Interacts with N-1-naphthylphthalamic acid (NPA).</text>
</comment>
<comment type="subcellular location">
    <subcellularLocation>
        <location>Membrane</location>
        <topology>Peripheral membrane protein</topology>
    </subcellularLocation>
    <subcellularLocation>
        <location>Microsome membrane</location>
        <topology>Peripheral membrane protein</topology>
    </subcellularLocation>
    <subcellularLocation>
        <location>Cytoplasm</location>
    </subcellularLocation>
    <text>The dileucine internalization motif may be involved in intracellular sequestration.</text>
</comment>
<comment type="tissue specificity">
    <text evidence="4 5">Ubiquitous with preferential expression in 5 days-old seedlings, roots, young flowers, upper inflorescence stems, and rosette leaves.</text>
</comment>
<comment type="developmental stage">
    <text evidence="4 5">Expression starts at 3 days and peaks at 5 days. After, expression levels remain constant from 7 to 10 days. During embryogenesis, expressed first at the site of root meristem formation, then in the epidernal and ground tissue, root meristem and suspensor. In the mature embryo, expressed in the vascular primordia throughout the hypocotyl/root axis.</text>
</comment>
<comment type="domain">
    <text>Dileucine motif seems to be involved in protein-protein interactions.</text>
</comment>
<comment type="disruption phenotype">
    <text evidence="5">Loss-of-function mutants show irregular, uncoordinated cell divisions throughout embryogenesis, affecting the shape and number of cotyledons and the hypophysis, and is seedling lethal at 5 days after germination due to root growth arrest. Quiescent center and cell cycle markers show no signals in apm1-1 knockdown mutants, and the ground tissue specifiers SHORTROOT and SCARECROW are misexpressed or mislocalized. apm1 mutants have multiple, fused cotyledons and hypocotyls with enlarged epidermal cells with cell adhesion defects. apm1 alleles show defects in gravitropism and auxin transport.</text>
</comment>
<comment type="similarity">
    <text evidence="8">Belongs to the peptidase M1 family.</text>
</comment>
<comment type="sequence caution" evidence="8">
    <conflict type="erroneous initiation">
        <sequence resource="EMBL-CDS" id="BAD94901"/>
    </conflict>
    <text>Truncated N-terminus.</text>
</comment>
<comment type="sequence caution" evidence="8">
    <conflict type="erroneous gene model prediction">
        <sequence resource="EMBL-CDS" id="CAB36783"/>
    </conflict>
</comment>
<comment type="sequence caution" evidence="8">
    <conflict type="erroneous gene model prediction">
        <sequence resource="EMBL-CDS" id="CAB80026"/>
    </conflict>
</comment>
<protein>
    <recommendedName>
        <fullName>Aminopeptidase M1</fullName>
        <ecNumber>3.4.11.2</ecNumber>
    </recommendedName>
    <alternativeName>
        <fullName>Alpha-aminoacylpeptide hydrolase</fullName>
    </alternativeName>
</protein>
<name>APM1_ARATH</name>
<evidence type="ECO:0000250" key="1"/>
<evidence type="ECO:0000255" key="2"/>
<evidence type="ECO:0000255" key="3">
    <source>
        <dbReference type="PROSITE-ProRule" id="PRU10095"/>
    </source>
</evidence>
<evidence type="ECO:0000269" key="4">
    <source>
    </source>
</evidence>
<evidence type="ECO:0000269" key="5">
    <source>
    </source>
</evidence>
<evidence type="ECO:0000269" key="6">
    <source>
    </source>
</evidence>
<evidence type="ECO:0000269" key="7">
    <source>
    </source>
</evidence>
<evidence type="ECO:0000305" key="8"/>
<gene>
    <name type="primary">APM1</name>
    <name type="ordered locus">At4g33090</name>
    <name type="ORF">F4I10_20</name>
</gene>
<reference key="1">
    <citation type="journal article" date="2002" name="Plant Physiol.">
        <title>Identification, purification, and molecular cloning of N-1-naphthylphthalmic acid-binding plasma membrane-associated aminopeptidases from Arabidopsis.</title>
        <authorList>
            <person name="Murphy A.S."/>
            <person name="Hoogner K.R."/>
            <person name="Peer W.A."/>
            <person name="Taiz L."/>
        </authorList>
    </citation>
    <scope>NUCLEOTIDE SEQUENCE [MRNA]</scope>
    <scope>PROTEIN SEQUENCE OF 161-173 AND 301-314</scope>
    <scope>FUNCTION</scope>
    <scope>BINDING TO NPA</scope>
    <scope>TISSUE SPECIFICITY</scope>
    <scope>DEVELOPMENTAL STAGE</scope>
    <scope>SUBCELLULAR LOCATION</scope>
    <scope>COFACTOR</scope>
    <scope>BIOPHYSICOCHEMICAL PROPERTIES</scope>
    <source>
        <strain>cv. Columbia</strain>
    </source>
</reference>
<reference key="2">
    <citation type="journal article" date="1999" name="Nature">
        <title>Sequence and analysis of chromosome 4 of the plant Arabidopsis thaliana.</title>
        <authorList>
            <person name="Mayer K.F.X."/>
            <person name="Schueller C."/>
            <person name="Wambutt R."/>
            <person name="Murphy G."/>
            <person name="Volckaert G."/>
            <person name="Pohl T."/>
            <person name="Duesterhoeft A."/>
            <person name="Stiekema W."/>
            <person name="Entian K.-D."/>
            <person name="Terryn N."/>
            <person name="Harris B."/>
            <person name="Ansorge W."/>
            <person name="Brandt P."/>
            <person name="Grivell L.A."/>
            <person name="Rieger M."/>
            <person name="Weichselgartner M."/>
            <person name="de Simone V."/>
            <person name="Obermaier B."/>
            <person name="Mache R."/>
            <person name="Mueller M."/>
            <person name="Kreis M."/>
            <person name="Delseny M."/>
            <person name="Puigdomenech P."/>
            <person name="Watson M."/>
            <person name="Schmidtheini T."/>
            <person name="Reichert B."/>
            <person name="Portetelle D."/>
            <person name="Perez-Alonso M."/>
            <person name="Boutry M."/>
            <person name="Bancroft I."/>
            <person name="Vos P."/>
            <person name="Hoheisel J."/>
            <person name="Zimmermann W."/>
            <person name="Wedler H."/>
            <person name="Ridley P."/>
            <person name="Langham S.-A."/>
            <person name="McCullagh B."/>
            <person name="Bilham L."/>
            <person name="Robben J."/>
            <person name="van der Schueren J."/>
            <person name="Grymonprez B."/>
            <person name="Chuang Y.-J."/>
            <person name="Vandenbussche F."/>
            <person name="Braeken M."/>
            <person name="Weltjens I."/>
            <person name="Voet M."/>
            <person name="Bastiaens I."/>
            <person name="Aert R."/>
            <person name="Defoor E."/>
            <person name="Weitzenegger T."/>
            <person name="Bothe G."/>
            <person name="Ramsperger U."/>
            <person name="Hilbert H."/>
            <person name="Braun M."/>
            <person name="Holzer E."/>
            <person name="Brandt A."/>
            <person name="Peters S."/>
            <person name="van Staveren M."/>
            <person name="Dirkse W."/>
            <person name="Mooijman P."/>
            <person name="Klein Lankhorst R."/>
            <person name="Rose M."/>
            <person name="Hauf J."/>
            <person name="Koetter P."/>
            <person name="Berneiser S."/>
            <person name="Hempel S."/>
            <person name="Feldpausch M."/>
            <person name="Lamberth S."/>
            <person name="Van den Daele H."/>
            <person name="De Keyser A."/>
            <person name="Buysshaert C."/>
            <person name="Gielen J."/>
            <person name="Villarroel R."/>
            <person name="De Clercq R."/>
            <person name="van Montagu M."/>
            <person name="Rogers J."/>
            <person name="Cronin A."/>
            <person name="Quail M.A."/>
            <person name="Bray-Allen S."/>
            <person name="Clark L."/>
            <person name="Doggett J."/>
            <person name="Hall S."/>
            <person name="Kay M."/>
            <person name="Lennard N."/>
            <person name="McLay K."/>
            <person name="Mayes R."/>
            <person name="Pettett A."/>
            <person name="Rajandream M.A."/>
            <person name="Lyne M."/>
            <person name="Benes V."/>
            <person name="Rechmann S."/>
            <person name="Borkova D."/>
            <person name="Bloecker H."/>
            <person name="Scharfe M."/>
            <person name="Grimm M."/>
            <person name="Loehnert T.-H."/>
            <person name="Dose S."/>
            <person name="de Haan M."/>
            <person name="Maarse A.C."/>
            <person name="Schaefer M."/>
            <person name="Mueller-Auer S."/>
            <person name="Gabel C."/>
            <person name="Fuchs M."/>
            <person name="Fartmann B."/>
            <person name="Granderath K."/>
            <person name="Dauner D."/>
            <person name="Herzl A."/>
            <person name="Neumann S."/>
            <person name="Argiriou A."/>
            <person name="Vitale D."/>
            <person name="Liguori R."/>
            <person name="Piravandi E."/>
            <person name="Massenet O."/>
            <person name="Quigley F."/>
            <person name="Clabauld G."/>
            <person name="Muendlein A."/>
            <person name="Felber R."/>
            <person name="Schnabl S."/>
            <person name="Hiller R."/>
            <person name="Schmidt W."/>
            <person name="Lecharny A."/>
            <person name="Aubourg S."/>
            <person name="Chefdor F."/>
            <person name="Cooke R."/>
            <person name="Berger C."/>
            <person name="Monfort A."/>
            <person name="Casacuberta E."/>
            <person name="Gibbons T."/>
            <person name="Weber N."/>
            <person name="Vandenbol M."/>
            <person name="Bargues M."/>
            <person name="Terol J."/>
            <person name="Torres A."/>
            <person name="Perez-Perez A."/>
            <person name="Purnelle B."/>
            <person name="Bent E."/>
            <person name="Johnson S."/>
            <person name="Tacon D."/>
            <person name="Jesse T."/>
            <person name="Heijnen L."/>
            <person name="Schwarz S."/>
            <person name="Scholler P."/>
            <person name="Heber S."/>
            <person name="Francs P."/>
            <person name="Bielke C."/>
            <person name="Frishman D."/>
            <person name="Haase D."/>
            <person name="Lemcke K."/>
            <person name="Mewes H.-W."/>
            <person name="Stocker S."/>
            <person name="Zaccaria P."/>
            <person name="Bevan M."/>
            <person name="Wilson R.K."/>
            <person name="de la Bastide M."/>
            <person name="Habermann K."/>
            <person name="Parnell L."/>
            <person name="Dedhia N."/>
            <person name="Gnoj L."/>
            <person name="Schutz K."/>
            <person name="Huang E."/>
            <person name="Spiegel L."/>
            <person name="Sekhon M."/>
            <person name="Murray J."/>
            <person name="Sheet P."/>
            <person name="Cordes M."/>
            <person name="Abu-Threideh J."/>
            <person name="Stoneking T."/>
            <person name="Kalicki J."/>
            <person name="Graves T."/>
            <person name="Harmon G."/>
            <person name="Edwards J."/>
            <person name="Latreille P."/>
            <person name="Courtney L."/>
            <person name="Cloud J."/>
            <person name="Abbott A."/>
            <person name="Scott K."/>
            <person name="Johnson D."/>
            <person name="Minx P."/>
            <person name="Bentley D."/>
            <person name="Fulton B."/>
            <person name="Miller N."/>
            <person name="Greco T."/>
            <person name="Kemp K."/>
            <person name="Kramer J."/>
            <person name="Fulton L."/>
            <person name="Mardis E."/>
            <person name="Dante M."/>
            <person name="Pepin K."/>
            <person name="Hillier L.W."/>
            <person name="Nelson J."/>
            <person name="Spieth J."/>
            <person name="Ryan E."/>
            <person name="Andrews S."/>
            <person name="Geisel C."/>
            <person name="Layman D."/>
            <person name="Du H."/>
            <person name="Ali J."/>
            <person name="Berghoff A."/>
            <person name="Jones K."/>
            <person name="Drone K."/>
            <person name="Cotton M."/>
            <person name="Joshu C."/>
            <person name="Antonoiu B."/>
            <person name="Zidanic M."/>
            <person name="Strong C."/>
            <person name="Sun H."/>
            <person name="Lamar B."/>
            <person name="Yordan C."/>
            <person name="Ma P."/>
            <person name="Zhong J."/>
            <person name="Preston R."/>
            <person name="Vil D."/>
            <person name="Shekher M."/>
            <person name="Matero A."/>
            <person name="Shah R."/>
            <person name="Swaby I.K."/>
            <person name="O'Shaughnessy A."/>
            <person name="Rodriguez M."/>
            <person name="Hoffman J."/>
            <person name="Till S."/>
            <person name="Granat S."/>
            <person name="Shohdy N."/>
            <person name="Hasegawa A."/>
            <person name="Hameed A."/>
            <person name="Lodhi M."/>
            <person name="Johnson A."/>
            <person name="Chen E."/>
            <person name="Marra M.A."/>
            <person name="Martienssen R."/>
            <person name="McCombie W.R."/>
        </authorList>
    </citation>
    <scope>NUCLEOTIDE SEQUENCE [LARGE SCALE GENOMIC DNA]</scope>
    <source>
        <strain>cv. Columbia</strain>
    </source>
</reference>
<reference key="3">
    <citation type="journal article" date="2017" name="Plant J.">
        <title>Araport11: a complete reannotation of the Arabidopsis thaliana reference genome.</title>
        <authorList>
            <person name="Cheng C.Y."/>
            <person name="Krishnakumar V."/>
            <person name="Chan A.P."/>
            <person name="Thibaud-Nissen F."/>
            <person name="Schobel S."/>
            <person name="Town C.D."/>
        </authorList>
    </citation>
    <scope>GENOME REANNOTATION</scope>
    <source>
        <strain>cv. Columbia</strain>
    </source>
</reference>
<reference key="4">
    <citation type="journal article" date="2003" name="Science">
        <title>Empirical analysis of transcriptional activity in the Arabidopsis genome.</title>
        <authorList>
            <person name="Yamada K."/>
            <person name="Lim J."/>
            <person name="Dale J.M."/>
            <person name="Chen H."/>
            <person name="Shinn P."/>
            <person name="Palm C.J."/>
            <person name="Southwick A.M."/>
            <person name="Wu H.C."/>
            <person name="Kim C.J."/>
            <person name="Nguyen M."/>
            <person name="Pham P.K."/>
            <person name="Cheuk R.F."/>
            <person name="Karlin-Newmann G."/>
            <person name="Liu S.X."/>
            <person name="Lam B."/>
            <person name="Sakano H."/>
            <person name="Wu T."/>
            <person name="Yu G."/>
            <person name="Miranda M."/>
            <person name="Quach H.L."/>
            <person name="Tripp M."/>
            <person name="Chang C.H."/>
            <person name="Lee J.M."/>
            <person name="Toriumi M.J."/>
            <person name="Chan M.M."/>
            <person name="Tang C.C."/>
            <person name="Onodera C.S."/>
            <person name="Deng J.M."/>
            <person name="Akiyama K."/>
            <person name="Ansari Y."/>
            <person name="Arakawa T."/>
            <person name="Banh J."/>
            <person name="Banno F."/>
            <person name="Bowser L."/>
            <person name="Brooks S.Y."/>
            <person name="Carninci P."/>
            <person name="Chao Q."/>
            <person name="Choy N."/>
            <person name="Enju A."/>
            <person name="Goldsmith A.D."/>
            <person name="Gurjal M."/>
            <person name="Hansen N.F."/>
            <person name="Hayashizaki Y."/>
            <person name="Johnson-Hopson C."/>
            <person name="Hsuan V.W."/>
            <person name="Iida K."/>
            <person name="Karnes M."/>
            <person name="Khan S."/>
            <person name="Koesema E."/>
            <person name="Ishida J."/>
            <person name="Jiang P.X."/>
            <person name="Jones T."/>
            <person name="Kawai J."/>
            <person name="Kamiya A."/>
            <person name="Meyers C."/>
            <person name="Nakajima M."/>
            <person name="Narusaka M."/>
            <person name="Seki M."/>
            <person name="Sakurai T."/>
            <person name="Satou M."/>
            <person name="Tamse R."/>
            <person name="Vaysberg M."/>
            <person name="Wallender E.K."/>
            <person name="Wong C."/>
            <person name="Yamamura Y."/>
            <person name="Yuan S."/>
            <person name="Shinozaki K."/>
            <person name="Davis R.W."/>
            <person name="Theologis A."/>
            <person name="Ecker J.R."/>
        </authorList>
    </citation>
    <scope>NUCLEOTIDE SEQUENCE [LARGE SCALE MRNA]</scope>
    <source>
        <strain>cv. Columbia</strain>
    </source>
</reference>
<reference key="5">
    <citation type="submission" date="2006-07" db="EMBL/GenBank/DDBJ databases">
        <title>Large-scale analysis of RIKEN Arabidopsis full-length (RAFL) cDNAs.</title>
        <authorList>
            <person name="Totoki Y."/>
            <person name="Seki M."/>
            <person name="Ishida J."/>
            <person name="Nakajima M."/>
            <person name="Enju A."/>
            <person name="Kamiya A."/>
            <person name="Narusaka M."/>
            <person name="Shin-i T."/>
            <person name="Nakagawa M."/>
            <person name="Sakamoto N."/>
            <person name="Oishi K."/>
            <person name="Kohara Y."/>
            <person name="Kobayashi M."/>
            <person name="Toyoda A."/>
            <person name="Sakaki Y."/>
            <person name="Sakurai T."/>
            <person name="Iida K."/>
            <person name="Akiyama K."/>
            <person name="Satou M."/>
            <person name="Toyoda T."/>
            <person name="Konagaya A."/>
            <person name="Carninci P."/>
            <person name="Kawai J."/>
            <person name="Hayashizaki Y."/>
            <person name="Shinozaki K."/>
        </authorList>
    </citation>
    <scope>NUCLEOTIDE SEQUENCE [LARGE SCALE MRNA]</scope>
    <source>
        <strain>cv. Columbia</strain>
    </source>
</reference>
<reference key="6">
    <citation type="journal article" date="2009" name="Plant Cell">
        <title>Mutation of the membrane-associated M1 protease APM1 results in distinct embryonic and seedling developmental defects in Arabidopsis.</title>
        <authorList>
            <person name="Peer W.A."/>
            <person name="Hosein F.N."/>
            <person name="Bandyopadhyay A."/>
            <person name="Makam S.N."/>
            <person name="Otegui M.S."/>
            <person name="Lee G.J."/>
            <person name="Blakeslee J.J."/>
            <person name="Cheng Y."/>
            <person name="Titapiwatanakun B."/>
            <person name="Yakubov B."/>
            <person name="Bangari B."/>
            <person name="Murphy A.S."/>
        </authorList>
    </citation>
    <scope>DISRUPTION PHENOTYPE</scope>
    <scope>FUNCTION</scope>
    <scope>DEVELOPMENTAL STAGE</scope>
    <scope>TISSUE SPECIFICITY</scope>
    <scope>SUBCELLULAR LOCATION</scope>
</reference>
<reference key="7">
    <citation type="journal article" date="2010" name="Plant Physiol.">
        <title>The catalytic and protein-protein interaction domains are required for APM1 function.</title>
        <authorList>
            <person name="Hosein F.N."/>
            <person name="Bandyopadhyay A."/>
            <person name="Peer W.A."/>
            <person name="Murphy A.S."/>
        </authorList>
    </citation>
    <scope>SUBUNIT</scope>
    <scope>MOTIFS</scope>
    <scope>MUTAGENESIS OF MET-273; HIS-307 AND LEU-729</scope>
    <scope>FUNCTION</scope>
</reference>
<reference key="8">
    <citation type="journal article" date="2012" name="Mol. Biol. Rep.">
        <title>Cytoplasm localization of aminopeptidase M1 and its functional activity in root hair cells and BY-2 cells.</title>
        <authorList>
            <person name="Lee O.R."/>
            <person name="Cho H.T."/>
        </authorList>
    </citation>
    <scope>SUBCELLULAR LOCATION</scope>
    <scope>FUNCTION</scope>
</reference>
<accession>Q8VZH2</accession>
<accession>Q56WG9</accession>
<accession>Q9SN00</accession>
<feature type="chain" id="PRO_0000424583" description="Aminopeptidase M1">
    <location>
        <begin position="1"/>
        <end position="879"/>
    </location>
</feature>
<feature type="region of interest" description="Required for membrane association">
    <location>
        <begin position="98"/>
        <end position="205"/>
    </location>
</feature>
<feature type="short sequence motif" description="Dileucine internalization motif" evidence="2">
    <location>
        <begin position="728"/>
        <end position="729"/>
    </location>
</feature>
<feature type="active site" description="Proton acceptor" evidence="3">
    <location>
        <position position="308"/>
    </location>
</feature>
<feature type="binding site" evidence="1">
    <location>
        <position position="138"/>
    </location>
    <ligand>
        <name>substrate</name>
    </ligand>
</feature>
<feature type="binding site" evidence="1">
    <location>
        <begin position="271"/>
        <end position="275"/>
    </location>
    <ligand>
        <name>substrate</name>
    </ligand>
</feature>
<feature type="binding site" evidence="3">
    <location>
        <position position="307"/>
    </location>
    <ligand>
        <name>Zn(2+)</name>
        <dbReference type="ChEBI" id="CHEBI:29105"/>
        <note>catalytic</note>
    </ligand>
</feature>
<feature type="binding site" evidence="3">
    <location>
        <position position="311"/>
    </location>
    <ligand>
        <name>Zn(2+)</name>
        <dbReference type="ChEBI" id="CHEBI:29105"/>
        <note>catalytic</note>
    </ligand>
</feature>
<feature type="binding site" evidence="3">
    <location>
        <position position="330"/>
    </location>
    <ligand>
        <name>Zn(2+)</name>
        <dbReference type="ChEBI" id="CHEBI:29105"/>
        <note>catalytic</note>
    </ligand>
</feature>
<feature type="site" description="Transition state stabilizer" evidence="1">
    <location>
        <position position="392"/>
    </location>
</feature>
<feature type="mutagenesis site" description="Abolishes function." evidence="6">
    <original>M</original>
    <variation>K</variation>
    <location>
        <position position="273"/>
    </location>
</feature>
<feature type="mutagenesis site" description="Abolishes function." evidence="6">
    <original>H</original>
    <variation>A</variation>
    <location>
        <position position="307"/>
    </location>
</feature>
<feature type="mutagenesis site" description="Decreases protein stability and abolishes function." evidence="6">
    <original>L</original>
    <variation>A</variation>
    <location>
        <position position="729"/>
    </location>
</feature>
<proteinExistence type="evidence at protein level"/>